<keyword id="KW-0963">Cytoplasm</keyword>
<keyword id="KW-0378">Hydrolase</keyword>
<keyword id="KW-0464">Manganese</keyword>
<keyword id="KW-0479">Metal-binding</keyword>
<dbReference type="EC" id="3.6.1.1" evidence="1"/>
<dbReference type="EMBL" id="CP000560">
    <property type="protein sequence ID" value="ABS76088.1"/>
    <property type="molecule type" value="Genomic_DNA"/>
</dbReference>
<dbReference type="RefSeq" id="WP_004393053.1">
    <property type="nucleotide sequence ID" value="NC_009725.2"/>
</dbReference>
<dbReference type="SMR" id="A7ZAR2"/>
<dbReference type="GeneID" id="93082899"/>
<dbReference type="KEGG" id="bay:RBAM_037630"/>
<dbReference type="HOGENOM" id="CLU_025243_0_1_9"/>
<dbReference type="Proteomes" id="UP000001120">
    <property type="component" value="Chromosome"/>
</dbReference>
<dbReference type="GO" id="GO:0005737">
    <property type="term" value="C:cytoplasm"/>
    <property type="evidence" value="ECO:0007669"/>
    <property type="project" value="UniProtKB-SubCell"/>
</dbReference>
<dbReference type="GO" id="GO:0004427">
    <property type="term" value="F:inorganic diphosphate phosphatase activity"/>
    <property type="evidence" value="ECO:0007669"/>
    <property type="project" value="UniProtKB-UniRule"/>
</dbReference>
<dbReference type="GO" id="GO:0030145">
    <property type="term" value="F:manganese ion binding"/>
    <property type="evidence" value="ECO:0007669"/>
    <property type="project" value="UniProtKB-UniRule"/>
</dbReference>
<dbReference type="FunFam" id="3.10.310.20:FF:000001">
    <property type="entry name" value="Probable manganese-dependent inorganic pyrophosphatase"/>
    <property type="match status" value="1"/>
</dbReference>
<dbReference type="FunFam" id="3.90.1640.10:FF:000001">
    <property type="entry name" value="Probable manganese-dependent inorganic pyrophosphatase"/>
    <property type="match status" value="1"/>
</dbReference>
<dbReference type="Gene3D" id="3.10.310.20">
    <property type="entry name" value="DHHA2 domain"/>
    <property type="match status" value="1"/>
</dbReference>
<dbReference type="Gene3D" id="3.90.1640.10">
    <property type="entry name" value="inorganic pyrophosphatase (n-terminal core)"/>
    <property type="match status" value="1"/>
</dbReference>
<dbReference type="HAMAP" id="MF_00207">
    <property type="entry name" value="PPase_C"/>
    <property type="match status" value="1"/>
</dbReference>
<dbReference type="InterPro" id="IPR001667">
    <property type="entry name" value="DDH_dom"/>
</dbReference>
<dbReference type="InterPro" id="IPR038763">
    <property type="entry name" value="DHH_sf"/>
</dbReference>
<dbReference type="InterPro" id="IPR004097">
    <property type="entry name" value="DHHA2"/>
</dbReference>
<dbReference type="InterPro" id="IPR038222">
    <property type="entry name" value="DHHA2_dom_sf"/>
</dbReference>
<dbReference type="InterPro" id="IPR022934">
    <property type="entry name" value="Mn-dep_inorganic_PyrPase"/>
</dbReference>
<dbReference type="NCBIfam" id="NF003877">
    <property type="entry name" value="PRK05427.1"/>
    <property type="match status" value="1"/>
</dbReference>
<dbReference type="NCBIfam" id="NF011443">
    <property type="entry name" value="PRK14869.1-5"/>
    <property type="match status" value="1"/>
</dbReference>
<dbReference type="PANTHER" id="PTHR12112">
    <property type="entry name" value="BNIP - RELATED"/>
    <property type="match status" value="1"/>
</dbReference>
<dbReference type="PANTHER" id="PTHR12112:SF22">
    <property type="entry name" value="MANGANESE-DEPENDENT INORGANIC PYROPHOSPHATASE-RELATED"/>
    <property type="match status" value="1"/>
</dbReference>
<dbReference type="Pfam" id="PF01368">
    <property type="entry name" value="DHH"/>
    <property type="match status" value="1"/>
</dbReference>
<dbReference type="Pfam" id="PF02833">
    <property type="entry name" value="DHHA2"/>
    <property type="match status" value="1"/>
</dbReference>
<dbReference type="SMART" id="SM01131">
    <property type="entry name" value="DHHA2"/>
    <property type="match status" value="1"/>
</dbReference>
<dbReference type="SUPFAM" id="SSF64182">
    <property type="entry name" value="DHH phosphoesterases"/>
    <property type="match status" value="1"/>
</dbReference>
<gene>
    <name evidence="1" type="primary">ppaC</name>
    <name type="ordered locus">RBAM_037630</name>
</gene>
<sequence>MEKILIFGHQNPDTDTICSAIAYADLKNKLGFNAEPVRLGQVNGETQYALDYFKQESPRLVETAANEVNGVILVDHNERQQSIKDIEDVQVLEVIDHHRIANFETAEPLYYRAEPVGCTATILNKMYKENNVKIEKEIAGLMLSAIISDSLLFKSPTCTEQDIAAAKELAEIAGVDAEEYGLNMLKAGADLSKKTVEELISLDAKEFTLGSKKVEIAQVNTVDIEDVKKRQPELEAALSKVIAEKNLDLFLLVITDILENDSLALAIGDQASKVEKAFNVTLENNTALLKGVVSRKKQVVPVLTDAIAE</sequence>
<comment type="catalytic activity">
    <reaction evidence="1">
        <text>diphosphate + H2O = 2 phosphate + H(+)</text>
        <dbReference type="Rhea" id="RHEA:24576"/>
        <dbReference type="ChEBI" id="CHEBI:15377"/>
        <dbReference type="ChEBI" id="CHEBI:15378"/>
        <dbReference type="ChEBI" id="CHEBI:33019"/>
        <dbReference type="ChEBI" id="CHEBI:43474"/>
        <dbReference type="EC" id="3.6.1.1"/>
    </reaction>
</comment>
<comment type="cofactor">
    <cofactor evidence="1">
        <name>Mn(2+)</name>
        <dbReference type="ChEBI" id="CHEBI:29035"/>
    </cofactor>
    <text evidence="1">Binds 2 manganese ions per subunit.</text>
</comment>
<comment type="subcellular location">
    <subcellularLocation>
        <location evidence="1">Cytoplasm</location>
    </subcellularLocation>
</comment>
<comment type="similarity">
    <text evidence="1">Belongs to the PPase class C family.</text>
</comment>
<name>PPAC_BACVZ</name>
<evidence type="ECO:0000255" key="1">
    <source>
        <dbReference type="HAMAP-Rule" id="MF_00207"/>
    </source>
</evidence>
<accession>A7ZAR2</accession>
<organism>
    <name type="scientific">Bacillus velezensis (strain DSM 23117 / BGSC 10A6 / LMG 26770 / FZB42)</name>
    <name type="common">Bacillus amyloliquefaciens subsp. plantarum</name>
    <dbReference type="NCBI Taxonomy" id="326423"/>
    <lineage>
        <taxon>Bacteria</taxon>
        <taxon>Bacillati</taxon>
        <taxon>Bacillota</taxon>
        <taxon>Bacilli</taxon>
        <taxon>Bacillales</taxon>
        <taxon>Bacillaceae</taxon>
        <taxon>Bacillus</taxon>
        <taxon>Bacillus amyloliquefaciens group</taxon>
    </lineage>
</organism>
<protein>
    <recommendedName>
        <fullName evidence="1">Probable manganese-dependent inorganic pyrophosphatase</fullName>
        <ecNumber evidence="1">3.6.1.1</ecNumber>
    </recommendedName>
    <alternativeName>
        <fullName evidence="1">Pyrophosphate phospho-hydrolase</fullName>
        <shortName evidence="1">PPase</shortName>
    </alternativeName>
</protein>
<reference key="1">
    <citation type="journal article" date="2007" name="Nat. Biotechnol.">
        <title>Comparative analysis of the complete genome sequence of the plant growth-promoting bacterium Bacillus amyloliquefaciens FZB42.</title>
        <authorList>
            <person name="Chen X.H."/>
            <person name="Koumoutsi A."/>
            <person name="Scholz R."/>
            <person name="Eisenreich A."/>
            <person name="Schneider K."/>
            <person name="Heinemeyer I."/>
            <person name="Morgenstern B."/>
            <person name="Voss B."/>
            <person name="Hess W.R."/>
            <person name="Reva O."/>
            <person name="Junge H."/>
            <person name="Voigt B."/>
            <person name="Jungblut P.R."/>
            <person name="Vater J."/>
            <person name="Suessmuth R."/>
            <person name="Liesegang H."/>
            <person name="Strittmatter A."/>
            <person name="Gottschalk G."/>
            <person name="Borriss R."/>
        </authorList>
    </citation>
    <scope>NUCLEOTIDE SEQUENCE [LARGE SCALE GENOMIC DNA]</scope>
    <source>
        <strain>DSM 23117 / BGSC 10A6 / LMG 26770 / FZB42</strain>
    </source>
</reference>
<feature type="chain" id="PRO_1000012306" description="Probable manganese-dependent inorganic pyrophosphatase">
    <location>
        <begin position="1"/>
        <end position="309"/>
    </location>
</feature>
<feature type="binding site" evidence="1">
    <location>
        <position position="9"/>
    </location>
    <ligand>
        <name>Mn(2+)</name>
        <dbReference type="ChEBI" id="CHEBI:29035"/>
        <label>1</label>
    </ligand>
</feature>
<feature type="binding site" evidence="1">
    <location>
        <position position="13"/>
    </location>
    <ligand>
        <name>Mn(2+)</name>
        <dbReference type="ChEBI" id="CHEBI:29035"/>
        <label>1</label>
    </ligand>
</feature>
<feature type="binding site" evidence="1">
    <location>
        <position position="15"/>
    </location>
    <ligand>
        <name>Mn(2+)</name>
        <dbReference type="ChEBI" id="CHEBI:29035"/>
        <label>2</label>
    </ligand>
</feature>
<feature type="binding site" evidence="1">
    <location>
        <position position="75"/>
    </location>
    <ligand>
        <name>Mn(2+)</name>
        <dbReference type="ChEBI" id="CHEBI:29035"/>
        <label>1</label>
    </ligand>
</feature>
<feature type="binding site" evidence="1">
    <location>
        <position position="75"/>
    </location>
    <ligand>
        <name>Mn(2+)</name>
        <dbReference type="ChEBI" id="CHEBI:29035"/>
        <label>2</label>
    </ligand>
</feature>
<feature type="binding site" evidence="1">
    <location>
        <position position="97"/>
    </location>
    <ligand>
        <name>Mn(2+)</name>
        <dbReference type="ChEBI" id="CHEBI:29035"/>
        <label>2</label>
    </ligand>
</feature>
<feature type="binding site" evidence="1">
    <location>
        <position position="149"/>
    </location>
    <ligand>
        <name>Mn(2+)</name>
        <dbReference type="ChEBI" id="CHEBI:29035"/>
        <label>2</label>
    </ligand>
</feature>
<proteinExistence type="inferred from homology"/>